<sequence>MSSDAIRNTEQINAAIKIIENKTERPQSSTTPIDSKASTVAAANSTATETSRDLTQYTLDDGRVVSTNRRIMNKVPAITSHVPTDEELFQPNGIPRHEFLRDHFKREGKLSAAQAARIVTLATELFSKEPNLISVPAPITVCGDIHGQYFDLLKLFEVGGDPATTSYLFLGDYVDRGSFSFECLIYLYSLKLNFNDHFWLLRGNHECKHLTSYFTFKNEMLHKYNLDIYEKCCESFNNLPLAALMNGQYLCVHGGISPELNSLQDINNLNRFREIPSHGLMCDLLWADPIEEYDEVLDKDLTEEDIVNSKTMVPHHGKMAPSRDMFVPNSVRGCSYAFTYRAACHFLQETGLLSIIRAHEAQDAGYRMYKNTKTLGFPSLLTLFSAPNYLDTYNNKAAILKYENNVMNIRQFNMTPHPYWLPDFMDVFTWSLPFVGEKVTEMLVAILNICTEDELENDTPVIEELVGTDKKLPQAGKSEATPQPATSASPKHASILDDEHRRKALRNKILAVAKVSRMYSVLREETNKVQFLKDHNSGVLPRGALSNGVKGLDEALSTFERARKHDLINEKLPPSLDELKNENKKYYEKVWQKVHEHDAKNDSK</sequence>
<reference key="1">
    <citation type="journal article" date="1991" name="Proc. Natl. Acad. Sci. U.S.A.">
        <title>Yeast has homologs (CNA1 and CNA2 gene products) of mammalian calcineurin, a calmodulin-regulated phosphoprotein phosphatase.</title>
        <authorList>
            <person name="Cyert M.S."/>
            <person name="Kunisawa R."/>
            <person name="Kaim D."/>
            <person name="Thorner J."/>
        </authorList>
    </citation>
    <scope>NUCLEOTIDE SEQUENCE [GENOMIC DNA]</scope>
    <source>
        <strain>S288c / GRF88</strain>
    </source>
</reference>
<reference key="2">
    <citation type="journal article" date="1991" name="Mol. Gen. Genet.">
        <title>The Saccharomyces cerevisiae genes (CMP1 and CMP2) encoding calmodulin-binding proteins homologous to the catalytic subunit of mammalian protein phosphatase 2B.</title>
        <authorList>
            <person name="Liu Y."/>
            <person name="Ishii S."/>
            <person name="Tokai M."/>
            <person name="Tsutsumi H."/>
            <person name="Ohki O."/>
            <person name="Akada R."/>
            <person name="Tanaka K."/>
            <person name="Tsuchiya E."/>
            <person name="Fukui S."/>
            <person name="Miyakawa T."/>
        </authorList>
    </citation>
    <scope>NUCLEOTIDE SEQUENCE [GENOMIC DNA]</scope>
</reference>
<reference key="3">
    <citation type="journal article" date="1997" name="Nature">
        <title>The nucleotide sequence of Saccharomyces cerevisiae chromosome XIII.</title>
        <authorList>
            <person name="Bowman S."/>
            <person name="Churcher C.M."/>
            <person name="Badcock K."/>
            <person name="Brown D."/>
            <person name="Chillingworth T."/>
            <person name="Connor R."/>
            <person name="Dedman K."/>
            <person name="Devlin K."/>
            <person name="Gentles S."/>
            <person name="Hamlin N."/>
            <person name="Hunt S."/>
            <person name="Jagels K."/>
            <person name="Lye G."/>
            <person name="Moule S."/>
            <person name="Odell C."/>
            <person name="Pearson D."/>
            <person name="Rajandream M.A."/>
            <person name="Rice P."/>
            <person name="Skelton J."/>
            <person name="Walsh S.V."/>
            <person name="Whitehead S."/>
            <person name="Barrell B.G."/>
        </authorList>
    </citation>
    <scope>NUCLEOTIDE SEQUENCE [LARGE SCALE GENOMIC DNA]</scope>
    <source>
        <strain>ATCC 204508 / S288c</strain>
    </source>
</reference>
<reference key="4">
    <citation type="journal article" date="2014" name="G3 (Bethesda)">
        <title>The reference genome sequence of Saccharomyces cerevisiae: Then and now.</title>
        <authorList>
            <person name="Engel S.R."/>
            <person name="Dietrich F.S."/>
            <person name="Fisk D.G."/>
            <person name="Binkley G."/>
            <person name="Balakrishnan R."/>
            <person name="Costanzo M.C."/>
            <person name="Dwight S.S."/>
            <person name="Hitz B.C."/>
            <person name="Karra K."/>
            <person name="Nash R.S."/>
            <person name="Weng S."/>
            <person name="Wong E.D."/>
            <person name="Lloyd P."/>
            <person name="Skrzypek M.S."/>
            <person name="Miyasato S.R."/>
            <person name="Simison M."/>
            <person name="Cherry J.M."/>
        </authorList>
    </citation>
    <scope>GENOME REANNOTATION</scope>
    <source>
        <strain>ATCC 204508 / S288c</strain>
    </source>
</reference>
<reference key="5">
    <citation type="journal article" date="1989" name="Biochim. Biophys. Acta">
        <title>Isolation of a cDNA likely to encode a novel Ca2+-dependent/calmodulin-stimulated protein phosphatase.</title>
        <authorList>
            <person name="da Cruz e Silva E.F."/>
            <person name="Cohen P.T.W."/>
        </authorList>
    </citation>
    <scope>NUCLEOTIDE SEQUENCE [MRNA] OF 100-604</scope>
</reference>
<reference key="6">
    <citation type="journal article" date="2003" name="Nature">
        <title>Global analysis of protein expression in yeast.</title>
        <authorList>
            <person name="Ghaemmaghami S."/>
            <person name="Huh W.-K."/>
            <person name="Bower K."/>
            <person name="Howson R.W."/>
            <person name="Belle A."/>
            <person name="Dephoure N."/>
            <person name="O'Shea E.K."/>
            <person name="Weissman J.S."/>
        </authorList>
    </citation>
    <scope>LEVEL OF PROTEIN EXPRESSION [LARGE SCALE ANALYSIS]</scope>
</reference>
<reference key="7">
    <citation type="journal article" date="2008" name="Mol. Cell. Proteomics">
        <title>A multidimensional chromatography technology for in-depth phosphoproteome analysis.</title>
        <authorList>
            <person name="Albuquerque C.P."/>
            <person name="Smolka M.B."/>
            <person name="Payne S.H."/>
            <person name="Bafna V."/>
            <person name="Eng J."/>
            <person name="Zhou H."/>
        </authorList>
    </citation>
    <scope>PHOSPHORYLATION [LARGE SCALE ANALYSIS] AT SER-489</scope>
    <scope>IDENTIFICATION BY MASS SPECTROMETRY [LARGE SCALE ANALYSIS]</scope>
</reference>
<reference key="8">
    <citation type="journal article" date="2009" name="Science">
        <title>Global analysis of Cdk1 substrate phosphorylation sites provides insights into evolution.</title>
        <authorList>
            <person name="Holt L.J."/>
            <person name="Tuch B.B."/>
            <person name="Villen J."/>
            <person name="Johnson A.D."/>
            <person name="Gygi S.P."/>
            <person name="Morgan D.O."/>
        </authorList>
    </citation>
    <scope>PHOSPHORYLATION [LARGE SCALE ANALYSIS] AT THR-31</scope>
    <scope>IDENTIFICATION BY MASS SPECTROMETRY [LARGE SCALE ANALYSIS]</scope>
</reference>
<organism>
    <name type="scientific">Saccharomyces cerevisiae (strain ATCC 204508 / S288c)</name>
    <name type="common">Baker's yeast</name>
    <dbReference type="NCBI Taxonomy" id="559292"/>
    <lineage>
        <taxon>Eukaryota</taxon>
        <taxon>Fungi</taxon>
        <taxon>Dikarya</taxon>
        <taxon>Ascomycota</taxon>
        <taxon>Saccharomycotina</taxon>
        <taxon>Saccharomycetes</taxon>
        <taxon>Saccharomycetales</taxon>
        <taxon>Saccharomycetaceae</taxon>
        <taxon>Saccharomyces</taxon>
    </lineage>
</organism>
<gene>
    <name type="primary">CMP2</name>
    <name type="synonym">CNA2</name>
    <name type="ordered locus">YML057W</name>
    <name type="ORF">YM9958.05</name>
</gene>
<comment type="function">
    <text>Calcium-dependent, calmodulin-stimulated protein phosphatase. This subunit may have a role in the calmodulin activation of calcineurin.</text>
</comment>
<comment type="catalytic activity">
    <reaction>
        <text>O-phospho-L-seryl-[protein] + H2O = L-seryl-[protein] + phosphate</text>
        <dbReference type="Rhea" id="RHEA:20629"/>
        <dbReference type="Rhea" id="RHEA-COMP:9863"/>
        <dbReference type="Rhea" id="RHEA-COMP:11604"/>
        <dbReference type="ChEBI" id="CHEBI:15377"/>
        <dbReference type="ChEBI" id="CHEBI:29999"/>
        <dbReference type="ChEBI" id="CHEBI:43474"/>
        <dbReference type="ChEBI" id="CHEBI:83421"/>
        <dbReference type="EC" id="3.1.3.16"/>
    </reaction>
</comment>
<comment type="catalytic activity">
    <reaction>
        <text>O-phospho-L-threonyl-[protein] + H2O = L-threonyl-[protein] + phosphate</text>
        <dbReference type="Rhea" id="RHEA:47004"/>
        <dbReference type="Rhea" id="RHEA-COMP:11060"/>
        <dbReference type="Rhea" id="RHEA-COMP:11605"/>
        <dbReference type="ChEBI" id="CHEBI:15377"/>
        <dbReference type="ChEBI" id="CHEBI:30013"/>
        <dbReference type="ChEBI" id="CHEBI:43474"/>
        <dbReference type="ChEBI" id="CHEBI:61977"/>
        <dbReference type="EC" id="3.1.3.16"/>
    </reaction>
</comment>
<comment type="cofactor">
    <cofactor evidence="1">
        <name>Fe(3+)</name>
        <dbReference type="ChEBI" id="CHEBI:29034"/>
    </cofactor>
    <text evidence="1">Binds 1 Fe(3+) ion per subunit.</text>
</comment>
<comment type="cofactor">
    <cofactor evidence="1">
        <name>Zn(2+)</name>
        <dbReference type="ChEBI" id="CHEBI:29105"/>
    </cofactor>
    <text evidence="1">Binds 1 zinc ion per subunit.</text>
</comment>
<comment type="subunit">
    <text>Composed of two components (A and B), the A component is the catalytic subunit and the B component confers calcium sensitivity.</text>
</comment>
<comment type="interaction">
    <interactant intactId="EBI-12778">
        <id>P14747</id>
    </interactant>
    <interactant intactId="EBI-3968">
        <id>P25296</id>
        <label>CNB1</label>
    </interactant>
    <organismsDiffer>false</organismsDiffer>
    <experiments>6</experiments>
</comment>
<comment type="miscellaneous">
    <text evidence="4">Present with 7110 molecules/cell in log phase SD medium.</text>
</comment>
<comment type="similarity">
    <text evidence="5">Belongs to the PPP phosphatase family. PP-2B subfamily.</text>
</comment>
<comment type="caution">
    <text evidence="6">Was originally thought to originate from a rabbit cDNA library and was known as protein phosphatase 2Bw (PP2Bw).</text>
</comment>
<name>PP2B2_YEAST</name>
<feature type="chain" id="PRO_0000058837" description="Serine/threonine-protein phosphatase 2B catalytic subunit A2">
    <location>
        <begin position="1"/>
        <end position="604"/>
    </location>
</feature>
<feature type="region of interest" description="Disordered" evidence="3">
    <location>
        <begin position="21"/>
        <end position="48"/>
    </location>
</feature>
<feature type="region of interest" description="Disordered" evidence="3">
    <location>
        <begin position="470"/>
        <end position="497"/>
    </location>
</feature>
<feature type="region of interest" description="Calmodulin-binding" evidence="2">
    <location>
        <begin position="501"/>
        <end position="523"/>
    </location>
</feature>
<feature type="compositionally biased region" description="Low complexity" evidence="3">
    <location>
        <begin position="35"/>
        <end position="48"/>
    </location>
</feature>
<feature type="compositionally biased region" description="Polar residues" evidence="3">
    <location>
        <begin position="480"/>
        <end position="489"/>
    </location>
</feature>
<feature type="active site" description="Proton donor" evidence="1">
    <location>
        <position position="205"/>
    </location>
</feature>
<feature type="binding site" evidence="1">
    <location>
        <position position="144"/>
    </location>
    <ligand>
        <name>Fe cation</name>
        <dbReference type="ChEBI" id="CHEBI:24875"/>
    </ligand>
</feature>
<feature type="binding site" evidence="1">
    <location>
        <position position="146"/>
    </location>
    <ligand>
        <name>Fe cation</name>
        <dbReference type="ChEBI" id="CHEBI:24875"/>
    </ligand>
</feature>
<feature type="binding site" evidence="1">
    <location>
        <position position="172"/>
    </location>
    <ligand>
        <name>Fe cation</name>
        <dbReference type="ChEBI" id="CHEBI:24875"/>
    </ligand>
</feature>
<feature type="binding site" evidence="1">
    <location>
        <position position="172"/>
    </location>
    <ligand>
        <name>Zn(2+)</name>
        <dbReference type="ChEBI" id="CHEBI:29105"/>
    </ligand>
</feature>
<feature type="binding site" evidence="1">
    <location>
        <position position="204"/>
    </location>
    <ligand>
        <name>Zn(2+)</name>
        <dbReference type="ChEBI" id="CHEBI:29105"/>
    </ligand>
</feature>
<feature type="binding site" evidence="1">
    <location>
        <position position="253"/>
    </location>
    <ligand>
        <name>Zn(2+)</name>
        <dbReference type="ChEBI" id="CHEBI:29105"/>
    </ligand>
</feature>
<feature type="binding site" evidence="1">
    <location>
        <position position="359"/>
    </location>
    <ligand>
        <name>Zn(2+)</name>
        <dbReference type="ChEBI" id="CHEBI:29105"/>
    </ligand>
</feature>
<feature type="modified residue" description="Phosphothreonine" evidence="8">
    <location>
        <position position="31"/>
    </location>
</feature>
<feature type="modified residue" description="Phosphoserine" evidence="7">
    <location>
        <position position="489"/>
    </location>
</feature>
<feature type="modified residue" description="Phosphoserine" evidence="2">
    <location>
        <position position="520"/>
    </location>
</feature>
<feature type="sequence conflict" description="In Ref. 2; CAA38712." evidence="5" ref="2">
    <original>EL</original>
    <variation>DV</variation>
    <location>
        <begin position="87"/>
        <end position="88"/>
    </location>
</feature>
<feature type="sequence conflict" description="In Ref. 5; CAA34722." evidence="5" ref="5">
    <original>N</original>
    <variation>K</variation>
    <location>
        <position position="581"/>
    </location>
</feature>
<accession>P14747</accession>
<accession>D6VZB7</accession>
<protein>
    <recommendedName>
        <fullName>Serine/threonine-protein phosphatase 2B catalytic subunit A2</fullName>
        <ecNumber>3.1.3.16</ecNumber>
    </recommendedName>
    <alternativeName>
        <fullName>Calcineurin A2</fullName>
    </alternativeName>
    <alternativeName>
        <fullName>Calmodulin-binding protein 2</fullName>
    </alternativeName>
</protein>
<proteinExistence type="evidence at protein level"/>
<dbReference type="EC" id="3.1.3.16"/>
<dbReference type="EMBL" id="M64840">
    <property type="protein sequence ID" value="AAA34466.1"/>
    <property type="molecule type" value="Genomic_DNA"/>
</dbReference>
<dbReference type="EMBL" id="X16804">
    <property type="protein sequence ID" value="CAA34722.1"/>
    <property type="molecule type" value="mRNA"/>
</dbReference>
<dbReference type="EMBL" id="Z46729">
    <property type="protein sequence ID" value="CAA86718.1"/>
    <property type="molecule type" value="Genomic_DNA"/>
</dbReference>
<dbReference type="EMBL" id="X54964">
    <property type="protein sequence ID" value="CAA38712.1"/>
    <property type="molecule type" value="Genomic_DNA"/>
</dbReference>
<dbReference type="EMBL" id="BK006946">
    <property type="protein sequence ID" value="DAA09841.1"/>
    <property type="molecule type" value="Genomic_DNA"/>
</dbReference>
<dbReference type="PIR" id="S49804">
    <property type="entry name" value="S49804"/>
</dbReference>
<dbReference type="RefSeq" id="NP_013655.1">
    <property type="nucleotide sequence ID" value="NM_001182415.1"/>
</dbReference>
<dbReference type="SMR" id="P14747"/>
<dbReference type="BioGRID" id="35110">
    <property type="interactions" value="141"/>
</dbReference>
<dbReference type="ComplexPortal" id="CPX-590">
    <property type="entry name" value="Calcineurin complex variant 2"/>
</dbReference>
<dbReference type="DIP" id="DIP-833N"/>
<dbReference type="FunCoup" id="P14747">
    <property type="interactions" value="640"/>
</dbReference>
<dbReference type="IntAct" id="P14747">
    <property type="interactions" value="29"/>
</dbReference>
<dbReference type="MINT" id="P14747"/>
<dbReference type="STRING" id="4932.YML057W"/>
<dbReference type="iPTMnet" id="P14747"/>
<dbReference type="PaxDb" id="4932-YML057W"/>
<dbReference type="PeptideAtlas" id="P14747"/>
<dbReference type="TopDownProteomics" id="P14747"/>
<dbReference type="EnsemblFungi" id="YML057W_mRNA">
    <property type="protein sequence ID" value="YML057W"/>
    <property type="gene ID" value="YML057W"/>
</dbReference>
<dbReference type="GeneID" id="854946"/>
<dbReference type="KEGG" id="sce:YML057W"/>
<dbReference type="AGR" id="SGD:S000004521"/>
<dbReference type="SGD" id="S000004521">
    <property type="gene designation" value="CMP2"/>
</dbReference>
<dbReference type="VEuPathDB" id="FungiDB:YML057W"/>
<dbReference type="eggNOG" id="KOG0375">
    <property type="taxonomic scope" value="Eukaryota"/>
</dbReference>
<dbReference type="GeneTree" id="ENSGT00940000176583"/>
<dbReference type="HOGENOM" id="CLU_004962_6_2_1"/>
<dbReference type="InParanoid" id="P14747"/>
<dbReference type="OMA" id="PSHGLMC"/>
<dbReference type="OrthoDB" id="5593063at2759"/>
<dbReference type="BioCyc" id="YEAST:G3O-32652-MONOMER"/>
<dbReference type="BioGRID-ORCS" id="854946">
    <property type="hits" value="0 hits in 10 CRISPR screens"/>
</dbReference>
<dbReference type="PRO" id="PR:P14747"/>
<dbReference type="Proteomes" id="UP000002311">
    <property type="component" value="Chromosome XIII"/>
</dbReference>
<dbReference type="RNAct" id="P14747">
    <property type="molecule type" value="protein"/>
</dbReference>
<dbReference type="GO" id="GO:0005955">
    <property type="term" value="C:calcineurin complex"/>
    <property type="evidence" value="ECO:0000314"/>
    <property type="project" value="SGD"/>
</dbReference>
<dbReference type="GO" id="GO:0005737">
    <property type="term" value="C:cytoplasm"/>
    <property type="evidence" value="ECO:0007005"/>
    <property type="project" value="SGD"/>
</dbReference>
<dbReference type="GO" id="GO:0005516">
    <property type="term" value="F:calmodulin binding"/>
    <property type="evidence" value="ECO:0000318"/>
    <property type="project" value="GO_Central"/>
</dbReference>
<dbReference type="GO" id="GO:0033192">
    <property type="term" value="F:calmodulin-dependent protein phosphatase activity"/>
    <property type="evidence" value="ECO:0000318"/>
    <property type="project" value="GO_Central"/>
</dbReference>
<dbReference type="GO" id="GO:0046872">
    <property type="term" value="F:metal ion binding"/>
    <property type="evidence" value="ECO:0007669"/>
    <property type="project" value="UniProtKB-KW"/>
</dbReference>
<dbReference type="GO" id="GO:0097720">
    <property type="term" value="P:calcineurin-mediated signaling"/>
    <property type="evidence" value="ECO:0000318"/>
    <property type="project" value="GO_Central"/>
</dbReference>
<dbReference type="GO" id="GO:0071444">
    <property type="term" value="P:cellular response to pheromone"/>
    <property type="evidence" value="ECO:0000315"/>
    <property type="project" value="SGD"/>
</dbReference>
<dbReference type="GO" id="GO:0000747">
    <property type="term" value="P:conjugation with cellular fusion"/>
    <property type="evidence" value="ECO:0000315"/>
    <property type="project" value="SGD"/>
</dbReference>
<dbReference type="GO" id="GO:0031505">
    <property type="term" value="P:fungal-type cell wall organization"/>
    <property type="evidence" value="ECO:0000318"/>
    <property type="project" value="GO_Central"/>
</dbReference>
<dbReference type="GO" id="GO:0006873">
    <property type="term" value="P:intracellular monoatomic ion homeostasis"/>
    <property type="evidence" value="ECO:0000315"/>
    <property type="project" value="SGD"/>
</dbReference>
<dbReference type="GO" id="GO:0045893">
    <property type="term" value="P:positive regulation of DNA-templated transcription"/>
    <property type="evidence" value="ECO:0000269"/>
    <property type="project" value="ComplexPortal"/>
</dbReference>
<dbReference type="GO" id="GO:0022604">
    <property type="term" value="P:regulation of cell morphogenesis"/>
    <property type="evidence" value="ECO:0000303"/>
    <property type="project" value="ComplexPortal"/>
</dbReference>
<dbReference type="CDD" id="cd07416">
    <property type="entry name" value="MPP_PP2B"/>
    <property type="match status" value="1"/>
</dbReference>
<dbReference type="Gene3D" id="3.60.21.10">
    <property type="match status" value="1"/>
</dbReference>
<dbReference type="InterPro" id="IPR004843">
    <property type="entry name" value="Calcineurin-like_PHP_ApaH"/>
</dbReference>
<dbReference type="InterPro" id="IPR029052">
    <property type="entry name" value="Metallo-depent_PP-like"/>
</dbReference>
<dbReference type="InterPro" id="IPR041751">
    <property type="entry name" value="MPP_PP2B"/>
</dbReference>
<dbReference type="InterPro" id="IPR043360">
    <property type="entry name" value="PP2B"/>
</dbReference>
<dbReference type="InterPro" id="IPR006186">
    <property type="entry name" value="Ser/Thr-sp_prot-phosphatase"/>
</dbReference>
<dbReference type="PANTHER" id="PTHR45673">
    <property type="entry name" value="SERINE/THREONINE-PROTEIN PHOSPHATASE 2B CATALYTIC SUBUNIT 1-RELATED"/>
    <property type="match status" value="1"/>
</dbReference>
<dbReference type="Pfam" id="PF00149">
    <property type="entry name" value="Metallophos"/>
    <property type="match status" value="1"/>
</dbReference>
<dbReference type="PRINTS" id="PR00114">
    <property type="entry name" value="STPHPHTASE"/>
</dbReference>
<dbReference type="SMART" id="SM00156">
    <property type="entry name" value="PP2Ac"/>
    <property type="match status" value="1"/>
</dbReference>
<dbReference type="SUPFAM" id="SSF56300">
    <property type="entry name" value="Metallo-dependent phosphatases"/>
    <property type="match status" value="1"/>
</dbReference>
<dbReference type="PROSITE" id="PS00125">
    <property type="entry name" value="SER_THR_PHOSPHATASE"/>
    <property type="match status" value="1"/>
</dbReference>
<evidence type="ECO:0000250" key="1"/>
<evidence type="ECO:0000255" key="2"/>
<evidence type="ECO:0000256" key="3">
    <source>
        <dbReference type="SAM" id="MobiDB-lite"/>
    </source>
</evidence>
<evidence type="ECO:0000269" key="4">
    <source>
    </source>
</evidence>
<evidence type="ECO:0000305" key="5"/>
<evidence type="ECO:0000305" key="6">
    <source>
    </source>
</evidence>
<evidence type="ECO:0007744" key="7">
    <source>
    </source>
</evidence>
<evidence type="ECO:0007744" key="8">
    <source>
    </source>
</evidence>
<keyword id="KW-0112">Calmodulin-binding</keyword>
<keyword id="KW-0378">Hydrolase</keyword>
<keyword id="KW-0408">Iron</keyword>
<keyword id="KW-0479">Metal-binding</keyword>
<keyword id="KW-0597">Phosphoprotein</keyword>
<keyword id="KW-0904">Protein phosphatase</keyword>
<keyword id="KW-1185">Reference proteome</keyword>
<keyword id="KW-0862">Zinc</keyword>